<gene>
    <name evidence="1" type="primary">fmt</name>
    <name type="ordered locus">PSPA7_0019</name>
</gene>
<protein>
    <recommendedName>
        <fullName evidence="1">Methionyl-tRNA formyltransferase</fullName>
        <ecNumber evidence="1">2.1.2.9</ecNumber>
    </recommendedName>
</protein>
<evidence type="ECO:0000255" key="1">
    <source>
        <dbReference type="HAMAP-Rule" id="MF_00182"/>
    </source>
</evidence>
<name>FMT_PSEP7</name>
<dbReference type="EC" id="2.1.2.9" evidence="1"/>
<dbReference type="EMBL" id="CP000744">
    <property type="protein sequence ID" value="ABR86249.1"/>
    <property type="molecule type" value="Genomic_DNA"/>
</dbReference>
<dbReference type="RefSeq" id="WP_041025264.1">
    <property type="nucleotide sequence ID" value="NC_009656.1"/>
</dbReference>
<dbReference type="SMR" id="A6UX80"/>
<dbReference type="KEGG" id="pap:PSPA7_0019"/>
<dbReference type="HOGENOM" id="CLU_033347_1_2_6"/>
<dbReference type="Proteomes" id="UP000001582">
    <property type="component" value="Chromosome"/>
</dbReference>
<dbReference type="GO" id="GO:0005829">
    <property type="term" value="C:cytosol"/>
    <property type="evidence" value="ECO:0007669"/>
    <property type="project" value="TreeGrafter"/>
</dbReference>
<dbReference type="GO" id="GO:0004479">
    <property type="term" value="F:methionyl-tRNA formyltransferase activity"/>
    <property type="evidence" value="ECO:0007669"/>
    <property type="project" value="UniProtKB-UniRule"/>
</dbReference>
<dbReference type="CDD" id="cd08646">
    <property type="entry name" value="FMT_core_Met-tRNA-FMT_N"/>
    <property type="match status" value="1"/>
</dbReference>
<dbReference type="CDD" id="cd08704">
    <property type="entry name" value="Met_tRNA_FMT_C"/>
    <property type="match status" value="1"/>
</dbReference>
<dbReference type="FunFam" id="3.40.50.170:FF:000003">
    <property type="entry name" value="Methionyl-tRNA formyltransferase"/>
    <property type="match status" value="1"/>
</dbReference>
<dbReference type="Gene3D" id="3.10.25.10">
    <property type="entry name" value="Formyl transferase, C-terminal domain"/>
    <property type="match status" value="1"/>
</dbReference>
<dbReference type="Gene3D" id="3.40.50.170">
    <property type="entry name" value="Formyl transferase, N-terminal domain"/>
    <property type="match status" value="1"/>
</dbReference>
<dbReference type="HAMAP" id="MF_00182">
    <property type="entry name" value="Formyl_trans"/>
    <property type="match status" value="1"/>
</dbReference>
<dbReference type="InterPro" id="IPR005794">
    <property type="entry name" value="Fmt"/>
</dbReference>
<dbReference type="InterPro" id="IPR005793">
    <property type="entry name" value="Formyl_trans_C"/>
</dbReference>
<dbReference type="InterPro" id="IPR037022">
    <property type="entry name" value="Formyl_trans_C_sf"/>
</dbReference>
<dbReference type="InterPro" id="IPR002376">
    <property type="entry name" value="Formyl_transf_N"/>
</dbReference>
<dbReference type="InterPro" id="IPR036477">
    <property type="entry name" value="Formyl_transf_N_sf"/>
</dbReference>
<dbReference type="InterPro" id="IPR011034">
    <property type="entry name" value="Formyl_transferase-like_C_sf"/>
</dbReference>
<dbReference type="InterPro" id="IPR001555">
    <property type="entry name" value="GART_AS"/>
</dbReference>
<dbReference type="InterPro" id="IPR044135">
    <property type="entry name" value="Met-tRNA-FMT_C"/>
</dbReference>
<dbReference type="InterPro" id="IPR041711">
    <property type="entry name" value="Met-tRNA-FMT_N"/>
</dbReference>
<dbReference type="NCBIfam" id="TIGR00460">
    <property type="entry name" value="fmt"/>
    <property type="match status" value="1"/>
</dbReference>
<dbReference type="PANTHER" id="PTHR11138">
    <property type="entry name" value="METHIONYL-TRNA FORMYLTRANSFERASE"/>
    <property type="match status" value="1"/>
</dbReference>
<dbReference type="PANTHER" id="PTHR11138:SF5">
    <property type="entry name" value="METHIONYL-TRNA FORMYLTRANSFERASE, MITOCHONDRIAL"/>
    <property type="match status" value="1"/>
</dbReference>
<dbReference type="Pfam" id="PF02911">
    <property type="entry name" value="Formyl_trans_C"/>
    <property type="match status" value="1"/>
</dbReference>
<dbReference type="Pfam" id="PF00551">
    <property type="entry name" value="Formyl_trans_N"/>
    <property type="match status" value="1"/>
</dbReference>
<dbReference type="SUPFAM" id="SSF50486">
    <property type="entry name" value="FMT C-terminal domain-like"/>
    <property type="match status" value="1"/>
</dbReference>
<dbReference type="SUPFAM" id="SSF53328">
    <property type="entry name" value="Formyltransferase"/>
    <property type="match status" value="1"/>
</dbReference>
<dbReference type="PROSITE" id="PS00373">
    <property type="entry name" value="GART"/>
    <property type="match status" value="1"/>
</dbReference>
<reference key="1">
    <citation type="submission" date="2007-06" db="EMBL/GenBank/DDBJ databases">
        <authorList>
            <person name="Dodson R.J."/>
            <person name="Harkins D."/>
            <person name="Paulsen I.T."/>
        </authorList>
    </citation>
    <scope>NUCLEOTIDE SEQUENCE [LARGE SCALE GENOMIC DNA]</scope>
    <source>
        <strain>DSM 24068 / PA7</strain>
    </source>
</reference>
<organism>
    <name type="scientific">Pseudomonas paraeruginosa (strain DSM 24068 / PA7)</name>
    <name type="common">Pseudomonas aeruginosa (strain PA7)</name>
    <dbReference type="NCBI Taxonomy" id="381754"/>
    <lineage>
        <taxon>Bacteria</taxon>
        <taxon>Pseudomonadati</taxon>
        <taxon>Pseudomonadota</taxon>
        <taxon>Gammaproteobacteria</taxon>
        <taxon>Pseudomonadales</taxon>
        <taxon>Pseudomonadaceae</taxon>
        <taxon>Pseudomonas</taxon>
        <taxon>Pseudomonas paraeruginosa</taxon>
    </lineage>
</organism>
<feature type="chain" id="PRO_1000058406" description="Methionyl-tRNA formyltransferase">
    <location>
        <begin position="1"/>
        <end position="310"/>
    </location>
</feature>
<feature type="binding site" evidence="1">
    <location>
        <begin position="109"/>
        <end position="112"/>
    </location>
    <ligand>
        <name>(6S)-5,6,7,8-tetrahydrofolate</name>
        <dbReference type="ChEBI" id="CHEBI:57453"/>
    </ligand>
</feature>
<keyword id="KW-0648">Protein biosynthesis</keyword>
<keyword id="KW-0808">Transferase</keyword>
<accession>A6UX80</accession>
<sequence length="310" mass="32467">MRIVFAGTPEFAAEHLKALLDTPHQLVAVYTQPDRPAGRGQKLMPSAVKSLALEHGLPVIQPPSLRSADAQAELAALRPDLMVVVAYGLILPQAVLDIPRLGCINSHASLLPRWRGAAPIQRAVEAGDAQSGVTVMQMEAGLDTGPMLLKVATPIAADDSGGSLHDRLAALGPKAVVEAIAGLAAGTLRGEVQDDALATYAHKLNKDEARLDWSRPAVELERQVRAFTPWPVCHSSLAGASLKVLGASLGHGSGTPGSILEASRDGLLVACGEGALRLTRLQLPGGKPLAFADLYNSRREQFAAGQVLGQ</sequence>
<proteinExistence type="inferred from homology"/>
<comment type="function">
    <text evidence="1">Attaches a formyl group to the free amino group of methionyl-tRNA(fMet). The formyl group appears to play a dual role in the initiator identity of N-formylmethionyl-tRNA by promoting its recognition by IF2 and preventing the misappropriation of this tRNA by the elongation apparatus.</text>
</comment>
<comment type="catalytic activity">
    <reaction evidence="1">
        <text>L-methionyl-tRNA(fMet) + (6R)-10-formyltetrahydrofolate = N-formyl-L-methionyl-tRNA(fMet) + (6S)-5,6,7,8-tetrahydrofolate + H(+)</text>
        <dbReference type="Rhea" id="RHEA:24380"/>
        <dbReference type="Rhea" id="RHEA-COMP:9952"/>
        <dbReference type="Rhea" id="RHEA-COMP:9953"/>
        <dbReference type="ChEBI" id="CHEBI:15378"/>
        <dbReference type="ChEBI" id="CHEBI:57453"/>
        <dbReference type="ChEBI" id="CHEBI:78530"/>
        <dbReference type="ChEBI" id="CHEBI:78844"/>
        <dbReference type="ChEBI" id="CHEBI:195366"/>
        <dbReference type="EC" id="2.1.2.9"/>
    </reaction>
</comment>
<comment type="similarity">
    <text evidence="1">Belongs to the Fmt family.</text>
</comment>